<sequence>MNLQLIFWIGLISSVCCVFGQADENRCLKANAKSCGECIQAGPNCGWCTNSTFLQEGMPTSARCDDLEALKKKGCHPNDIENPRGSKDIKKNKNVTNRSKGTAEKLQPEDITQIQPQQLVLQLRSGEPQTFTLKFKRAEDYPIDLYYLMDLSYSMKDDLENVKSLGTDLMNEMRRITSDFRIGFGSFVEKTVMPYISTTPAKLRNPCTNEQNCTSPFSYKNVLSLTDKGEVFNELVGKQRISGNLDSPEGGFDAIMQVAVCGSLIGWRNVTRLLVFSTDAGFHFAGDGKLGGIVLPNDGQCHLENDVYTMSHYYDYPSIAHLVQKLSENNIQTIFAVTEEFQPVYKELKNLIPKSAVGTLSANSSNVIQLIIDAYNSLSSEVILENSKLPEGVTINYKSYCKNGVNGTGENGRKCSNISIGDEVQFEISITANKCPNKNSETIKIKPLGFTEEVEIILQFICECECQGEGIPGSPKCHDGNGTFECGACRCNEGRVGRHCECSTDEVNSEDMDAYCRKENSSEICSNNGECVCGQCVCRKRDNTNEIYSGKFCECDNFNCDRSNGLICGGNGVCKCRVCECNPNYTGSACDCSLDTTSCMAVNGQICNGRGVCECGACKCTDPKFQGPTCEMCQTCLGVCAEHKECVQCRAFNKGEKKDTCAQECSHFNITKVENRDKLPQPGQVDPLSHCKEKDVDDCWFYFTYSVNGNNEATVHVVETPECPTGPDIIPIVAGVVAGIVLIGLALLLIWKLLMIIHDRREFAKFEKEKMNAKWDTGENPIYKSAVTTVVNPKYEGK</sequence>
<reference key="1">
    <citation type="journal article" date="2003" name="J. Virol.">
        <title>Foot-and-mouth disease virus receptors: comparison of bovine alpha(V) integrin utilization by type A and O viruses.</title>
        <authorList>
            <person name="Duque H."/>
            <person name="Baxt B."/>
        </authorList>
    </citation>
    <scope>NUCLEOTIDE SEQUENCE [MRNA] (ISOFORM 1)</scope>
    <scope>CHARACTERIZATION AS A FMDV RECEPTOR</scope>
    <source>
        <tissue>Tongue keratinocyte</tissue>
    </source>
</reference>
<reference key="2">
    <citation type="submission" date="2006-07" db="EMBL/GenBank/DDBJ databases">
        <title>Molecular cloning and characteristics of bovine integrin beta 1 cDNA.</title>
        <authorList>
            <person name="Du J."/>
            <person name="Chang H."/>
            <person name="Cong G."/>
            <person name="Shao J."/>
            <person name="Lin T."/>
            <person name="Liu Z."/>
            <person name="Liu X."/>
            <person name="Cai X."/>
            <person name="Xie Q."/>
        </authorList>
    </citation>
    <scope>NUCLEOTIDE SEQUENCE [MRNA] (ISOFORM 1)</scope>
</reference>
<reference key="3">
    <citation type="submission" date="2006-02" db="EMBL/GenBank/DDBJ databases">
        <authorList>
            <consortium name="NIH - Mammalian Gene Collection (MGC) project"/>
        </authorList>
    </citation>
    <scope>NUCLEOTIDE SEQUENCE [LARGE SCALE MRNA] (ISOFORM 2)</scope>
    <source>
        <strain>Hereford</strain>
        <tissue>Heart ventricle</tissue>
    </source>
</reference>
<reference key="4">
    <citation type="journal article" date="1995" name="Biol. Reprod.">
        <title>Fibronectin receptors in preimplantation development: cloning, expression, and localization of the alpha 5 and beta 1 integrin subunits in bovine trophoblast.</title>
        <authorList>
            <person name="Maclaren L.A."/>
            <person name="Wildeman A.G."/>
        </authorList>
    </citation>
    <scope>NUCLEOTIDE SEQUENCE [MRNA] OF 24-796 (ISOFORM 1)</scope>
    <scope>SUBCELLULAR LOCATION</scope>
    <scope>DEVELOPMENTAL STAGE</scope>
    <source>
        <tissue>Embryo</tissue>
    </source>
</reference>
<gene>
    <name type="primary">ITGB1</name>
</gene>
<dbReference type="EMBL" id="AF468058">
    <property type="protein sequence ID" value="AAL78037.1"/>
    <property type="molecule type" value="mRNA"/>
</dbReference>
<dbReference type="EMBL" id="DQ871214">
    <property type="protein sequence ID" value="ABH07895.1"/>
    <property type="molecule type" value="mRNA"/>
</dbReference>
<dbReference type="EMBL" id="BC114107">
    <property type="protein sequence ID" value="AAI14108.1"/>
    <property type="molecule type" value="mRNA"/>
</dbReference>
<dbReference type="EMBL" id="U10865">
    <property type="protein sequence ID" value="AAA80571.1"/>
    <property type="molecule type" value="mRNA"/>
</dbReference>
<dbReference type="PIR" id="I46059">
    <property type="entry name" value="I46059"/>
</dbReference>
<dbReference type="RefSeq" id="NP_776793.1">
    <property type="nucleotide sequence ID" value="NM_174368.3"/>
</dbReference>
<dbReference type="RefSeq" id="XP_005214205.1">
    <property type="nucleotide sequence ID" value="XM_005214148.3"/>
</dbReference>
<dbReference type="RefSeq" id="XP_010809399.1">
    <property type="nucleotide sequence ID" value="XM_010811097.2"/>
</dbReference>
<dbReference type="RefSeq" id="XP_024856076.1">
    <molecule id="P53712-1"/>
    <property type="nucleotide sequence ID" value="XM_025000308.2"/>
</dbReference>
<dbReference type="RefSeq" id="XP_024856077.1">
    <molecule id="P53712-1"/>
    <property type="nucleotide sequence ID" value="XM_025000309.2"/>
</dbReference>
<dbReference type="SMR" id="P53712"/>
<dbReference type="FunCoup" id="P53712">
    <property type="interactions" value="3011"/>
</dbReference>
<dbReference type="STRING" id="9913.ENSBTAP00000052015"/>
<dbReference type="GlyCosmos" id="P53712">
    <property type="glycosylation" value="12 sites, No reported glycans"/>
</dbReference>
<dbReference type="GlyGen" id="P53712">
    <property type="glycosylation" value="12 sites"/>
</dbReference>
<dbReference type="PaxDb" id="9913-ENSBTAP00000052015"/>
<dbReference type="PeptideAtlas" id="P53712"/>
<dbReference type="GeneID" id="281876"/>
<dbReference type="KEGG" id="bta:281876"/>
<dbReference type="CTD" id="3688"/>
<dbReference type="eggNOG" id="KOG1226">
    <property type="taxonomic scope" value="Eukaryota"/>
</dbReference>
<dbReference type="HOGENOM" id="CLU_011772_2_1_1"/>
<dbReference type="InParanoid" id="P53712"/>
<dbReference type="OrthoDB" id="410592at2759"/>
<dbReference type="TreeFam" id="TF105392"/>
<dbReference type="Proteomes" id="UP000009136">
    <property type="component" value="Unplaced"/>
</dbReference>
<dbReference type="GO" id="GO:0009986">
    <property type="term" value="C:cell surface"/>
    <property type="evidence" value="ECO:0000250"/>
    <property type="project" value="UniProtKB"/>
</dbReference>
<dbReference type="GO" id="GO:0005925">
    <property type="term" value="C:focal adhesion"/>
    <property type="evidence" value="ECO:0000250"/>
    <property type="project" value="UniProtKB"/>
</dbReference>
<dbReference type="GO" id="GO:0034679">
    <property type="term" value="C:integrin alpha9-beta1 complex"/>
    <property type="evidence" value="ECO:0000250"/>
    <property type="project" value="UniProtKB"/>
</dbReference>
<dbReference type="GO" id="GO:0008305">
    <property type="term" value="C:integrin complex"/>
    <property type="evidence" value="ECO:0000318"/>
    <property type="project" value="GO_Central"/>
</dbReference>
<dbReference type="GO" id="GO:0030027">
    <property type="term" value="C:lamellipodium"/>
    <property type="evidence" value="ECO:0007669"/>
    <property type="project" value="UniProtKB-SubCell"/>
</dbReference>
<dbReference type="GO" id="GO:0042470">
    <property type="term" value="C:melanosome"/>
    <property type="evidence" value="ECO:0007669"/>
    <property type="project" value="UniProtKB-SubCell"/>
</dbReference>
<dbReference type="GO" id="GO:0016020">
    <property type="term" value="C:membrane"/>
    <property type="evidence" value="ECO:0000250"/>
    <property type="project" value="UniProtKB"/>
</dbReference>
<dbReference type="GO" id="GO:0005886">
    <property type="term" value="C:plasma membrane"/>
    <property type="evidence" value="ECO:0000304"/>
    <property type="project" value="Reactome"/>
</dbReference>
<dbReference type="GO" id="GO:0055037">
    <property type="term" value="C:recycling endosome"/>
    <property type="evidence" value="ECO:0007669"/>
    <property type="project" value="UniProtKB-SubCell"/>
</dbReference>
<dbReference type="GO" id="GO:0032587">
    <property type="term" value="C:ruffle membrane"/>
    <property type="evidence" value="ECO:0007669"/>
    <property type="project" value="UniProtKB-SubCell"/>
</dbReference>
<dbReference type="GO" id="GO:0042383">
    <property type="term" value="C:sarcolemma"/>
    <property type="evidence" value="ECO:0007669"/>
    <property type="project" value="UniProtKB-SubCell"/>
</dbReference>
<dbReference type="GO" id="GO:0045202">
    <property type="term" value="C:synapse"/>
    <property type="evidence" value="ECO:0000318"/>
    <property type="project" value="GO_Central"/>
</dbReference>
<dbReference type="GO" id="GO:0098639">
    <property type="term" value="F:collagen binding involved in cell-matrix adhesion"/>
    <property type="evidence" value="ECO:0000318"/>
    <property type="project" value="GO_Central"/>
</dbReference>
<dbReference type="GO" id="GO:0001968">
    <property type="term" value="F:fibronectin binding"/>
    <property type="evidence" value="ECO:0000318"/>
    <property type="project" value="GO_Central"/>
</dbReference>
<dbReference type="GO" id="GO:0005178">
    <property type="term" value="F:integrin binding"/>
    <property type="evidence" value="ECO:0000318"/>
    <property type="project" value="GO_Central"/>
</dbReference>
<dbReference type="GO" id="GO:0098640">
    <property type="term" value="F:integrin binding involved in cell-matrix adhesion"/>
    <property type="evidence" value="ECO:0000250"/>
    <property type="project" value="UniProtKB"/>
</dbReference>
<dbReference type="GO" id="GO:0046872">
    <property type="term" value="F:metal ion binding"/>
    <property type="evidence" value="ECO:0007669"/>
    <property type="project" value="UniProtKB-KW"/>
</dbReference>
<dbReference type="GO" id="GO:0046982">
    <property type="term" value="F:protein heterodimerization activity"/>
    <property type="evidence" value="ECO:0000250"/>
    <property type="project" value="UniProtKB"/>
</dbReference>
<dbReference type="GO" id="GO:0019901">
    <property type="term" value="F:protein kinase binding"/>
    <property type="evidence" value="ECO:0000318"/>
    <property type="project" value="GO_Central"/>
</dbReference>
<dbReference type="GO" id="GO:0001618">
    <property type="term" value="F:virus receptor activity"/>
    <property type="evidence" value="ECO:0007669"/>
    <property type="project" value="UniProtKB-KW"/>
</dbReference>
<dbReference type="GO" id="GO:0033627">
    <property type="term" value="P:cell adhesion mediated by integrin"/>
    <property type="evidence" value="ECO:0000250"/>
    <property type="project" value="UniProtKB"/>
</dbReference>
<dbReference type="GO" id="GO:0016477">
    <property type="term" value="P:cell migration"/>
    <property type="evidence" value="ECO:0000318"/>
    <property type="project" value="GO_Central"/>
</dbReference>
<dbReference type="GO" id="GO:0098609">
    <property type="term" value="P:cell-cell adhesion"/>
    <property type="evidence" value="ECO:0000318"/>
    <property type="project" value="GO_Central"/>
</dbReference>
<dbReference type="GO" id="GO:0007160">
    <property type="term" value="P:cell-matrix adhesion"/>
    <property type="evidence" value="ECO:0000318"/>
    <property type="project" value="GO_Central"/>
</dbReference>
<dbReference type="GO" id="GO:0071404">
    <property type="term" value="P:cellular response to low-density lipoprotein particle stimulus"/>
    <property type="evidence" value="ECO:0000250"/>
    <property type="project" value="UniProtKB"/>
</dbReference>
<dbReference type="GO" id="GO:0007229">
    <property type="term" value="P:integrin-mediated signaling pathway"/>
    <property type="evidence" value="ECO:0000318"/>
    <property type="project" value="GO_Central"/>
</dbReference>
<dbReference type="GO" id="GO:0007517">
    <property type="term" value="P:muscle organ development"/>
    <property type="evidence" value="ECO:0007669"/>
    <property type="project" value="UniProtKB-KW"/>
</dbReference>
<dbReference type="GO" id="GO:0045445">
    <property type="term" value="P:myoblast differentiation"/>
    <property type="evidence" value="ECO:0000250"/>
    <property type="project" value="UniProtKB"/>
</dbReference>
<dbReference type="GO" id="GO:0007520">
    <property type="term" value="P:myoblast fusion"/>
    <property type="evidence" value="ECO:0000250"/>
    <property type="project" value="UniProtKB"/>
</dbReference>
<dbReference type="GO" id="GO:0045906">
    <property type="term" value="P:negative regulation of vasoconstriction"/>
    <property type="evidence" value="ECO:0000250"/>
    <property type="project" value="UniProtKB"/>
</dbReference>
<dbReference type="GO" id="GO:0030335">
    <property type="term" value="P:positive regulation of cell migration"/>
    <property type="evidence" value="ECO:0000250"/>
    <property type="project" value="UniProtKB"/>
</dbReference>
<dbReference type="GO" id="GO:1903078">
    <property type="term" value="P:positive regulation of protein localization to plasma membrane"/>
    <property type="evidence" value="ECO:0000250"/>
    <property type="project" value="UniProtKB"/>
</dbReference>
<dbReference type="GO" id="GO:0031623">
    <property type="term" value="P:receptor internalization"/>
    <property type="evidence" value="ECO:0000250"/>
    <property type="project" value="UniProtKB"/>
</dbReference>
<dbReference type="GO" id="GO:0010710">
    <property type="term" value="P:regulation of collagen catabolic process"/>
    <property type="evidence" value="ECO:0000250"/>
    <property type="project" value="UniProtKB"/>
</dbReference>
<dbReference type="FunFam" id="1.20.5.100:FF:000002">
    <property type="entry name" value="Integrin beta"/>
    <property type="match status" value="1"/>
</dbReference>
<dbReference type="FunFam" id="2.10.25.10:FF:000043">
    <property type="entry name" value="Integrin beta"/>
    <property type="match status" value="1"/>
</dbReference>
<dbReference type="FunFam" id="2.10.25.10:FF:000075">
    <property type="entry name" value="Integrin beta"/>
    <property type="match status" value="1"/>
</dbReference>
<dbReference type="FunFam" id="2.10.25.10:FF:000155">
    <property type="entry name" value="Integrin beta"/>
    <property type="match status" value="1"/>
</dbReference>
<dbReference type="FunFam" id="2.60.40.1510:FF:000003">
    <property type="entry name" value="Integrin beta"/>
    <property type="match status" value="1"/>
</dbReference>
<dbReference type="FunFam" id="3.30.1680.10:FF:000005">
    <property type="entry name" value="Integrin beta"/>
    <property type="match status" value="1"/>
</dbReference>
<dbReference type="FunFam" id="3.40.50.410:FF:000002">
    <property type="entry name" value="Integrin beta"/>
    <property type="match status" value="1"/>
</dbReference>
<dbReference type="FunFam" id="4.10.1240.30:FF:000002">
    <property type="entry name" value="Integrin beta"/>
    <property type="match status" value="1"/>
</dbReference>
<dbReference type="Gene3D" id="4.10.1240.30">
    <property type="match status" value="1"/>
</dbReference>
<dbReference type="Gene3D" id="1.20.5.100">
    <property type="entry name" value="Cytochrome c1, transmembrane anchor, C-terminal"/>
    <property type="match status" value="1"/>
</dbReference>
<dbReference type="Gene3D" id="2.10.25.10">
    <property type="entry name" value="Laminin"/>
    <property type="match status" value="4"/>
</dbReference>
<dbReference type="Gene3D" id="3.30.1680.10">
    <property type="entry name" value="ligand-binding face of the semaphorins, domain 2"/>
    <property type="match status" value="1"/>
</dbReference>
<dbReference type="Gene3D" id="2.60.40.1510">
    <property type="entry name" value="ntegrin, alpha v. Chain A, domain 3"/>
    <property type="match status" value="1"/>
</dbReference>
<dbReference type="Gene3D" id="3.40.50.410">
    <property type="entry name" value="von Willebrand factor, type A domain"/>
    <property type="match status" value="1"/>
</dbReference>
<dbReference type="InterPro" id="IPR013111">
    <property type="entry name" value="EGF_extracell"/>
</dbReference>
<dbReference type="InterPro" id="IPR040622">
    <property type="entry name" value="I-EGF_1"/>
</dbReference>
<dbReference type="InterPro" id="IPR033760">
    <property type="entry name" value="Integrin_beta_N"/>
</dbReference>
<dbReference type="InterPro" id="IPR015812">
    <property type="entry name" value="Integrin_bsu"/>
</dbReference>
<dbReference type="InterPro" id="IPR014836">
    <property type="entry name" value="Integrin_bsu_cyt_dom"/>
</dbReference>
<dbReference type="InterPro" id="IPR012896">
    <property type="entry name" value="Integrin_bsu_tail"/>
</dbReference>
<dbReference type="InterPro" id="IPR036349">
    <property type="entry name" value="Integrin_bsu_tail_dom_sf"/>
</dbReference>
<dbReference type="InterPro" id="IPR002369">
    <property type="entry name" value="Integrin_bsu_VWA"/>
</dbReference>
<dbReference type="InterPro" id="IPR032695">
    <property type="entry name" value="Integrin_dom_sf"/>
</dbReference>
<dbReference type="InterPro" id="IPR016201">
    <property type="entry name" value="PSI"/>
</dbReference>
<dbReference type="InterPro" id="IPR036465">
    <property type="entry name" value="vWFA_dom_sf"/>
</dbReference>
<dbReference type="PANTHER" id="PTHR10082">
    <property type="entry name" value="INTEGRIN BETA SUBUNIT"/>
    <property type="match status" value="1"/>
</dbReference>
<dbReference type="PANTHER" id="PTHR10082:SF28">
    <property type="entry name" value="INTEGRIN BETA-1"/>
    <property type="match status" value="1"/>
</dbReference>
<dbReference type="Pfam" id="PF07974">
    <property type="entry name" value="EGF_2"/>
    <property type="match status" value="1"/>
</dbReference>
<dbReference type="Pfam" id="PF23105">
    <property type="entry name" value="EGF_integrin"/>
    <property type="match status" value="1"/>
</dbReference>
<dbReference type="Pfam" id="PF18372">
    <property type="entry name" value="I-EGF_1"/>
    <property type="match status" value="1"/>
</dbReference>
<dbReference type="Pfam" id="PF08725">
    <property type="entry name" value="Integrin_b_cyt"/>
    <property type="match status" value="1"/>
</dbReference>
<dbReference type="Pfam" id="PF07965">
    <property type="entry name" value="Integrin_B_tail"/>
    <property type="match status" value="1"/>
</dbReference>
<dbReference type="Pfam" id="PF00362">
    <property type="entry name" value="Integrin_beta"/>
    <property type="match status" value="1"/>
</dbReference>
<dbReference type="Pfam" id="PF17205">
    <property type="entry name" value="PSI_integrin"/>
    <property type="match status" value="1"/>
</dbReference>
<dbReference type="PIRSF" id="PIRSF002512">
    <property type="entry name" value="Integrin_B"/>
    <property type="match status" value="1"/>
</dbReference>
<dbReference type="PRINTS" id="PR01186">
    <property type="entry name" value="INTEGRINB"/>
</dbReference>
<dbReference type="SMART" id="SM00187">
    <property type="entry name" value="INB"/>
    <property type="match status" value="1"/>
</dbReference>
<dbReference type="SMART" id="SM01241">
    <property type="entry name" value="Integrin_b_cyt"/>
    <property type="match status" value="1"/>
</dbReference>
<dbReference type="SMART" id="SM01242">
    <property type="entry name" value="Integrin_B_tail"/>
    <property type="match status" value="1"/>
</dbReference>
<dbReference type="SMART" id="SM00423">
    <property type="entry name" value="PSI"/>
    <property type="match status" value="1"/>
</dbReference>
<dbReference type="SUPFAM" id="SSF57196">
    <property type="entry name" value="EGF/Laminin"/>
    <property type="match status" value="2"/>
</dbReference>
<dbReference type="SUPFAM" id="SSF69687">
    <property type="entry name" value="Integrin beta tail domain"/>
    <property type="match status" value="1"/>
</dbReference>
<dbReference type="SUPFAM" id="SSF69179">
    <property type="entry name" value="Integrin domains"/>
    <property type="match status" value="1"/>
</dbReference>
<dbReference type="SUPFAM" id="SSF103575">
    <property type="entry name" value="Plexin repeat"/>
    <property type="match status" value="1"/>
</dbReference>
<dbReference type="SUPFAM" id="SSF53300">
    <property type="entry name" value="vWA-like"/>
    <property type="match status" value="1"/>
</dbReference>
<dbReference type="PROSITE" id="PS00022">
    <property type="entry name" value="EGF_1"/>
    <property type="match status" value="2"/>
</dbReference>
<dbReference type="PROSITE" id="PS00243">
    <property type="entry name" value="I_EGF_1"/>
    <property type="match status" value="3"/>
</dbReference>
<dbReference type="PROSITE" id="PS52047">
    <property type="entry name" value="I_EGF_2"/>
    <property type="match status" value="4"/>
</dbReference>
<comment type="function">
    <text evidence="3 4 5">Integrins alpha-1/beta-1, alpha-2/beta-1, alpha-10/beta-1 and alpha-11/beta-1 are receptors for collagen. Integrins alpha-1/beta-1 and alpha-2/beta-2 recognize the proline-hydroxylated sequence G-F-P-G-E-R in collagen. Integrins alpha-2/beta-1, alpha-3/beta-1, alpha-4/beta-1, alpha-5/beta-1, alpha-8/beta-1, alpha-10/beta-1, alpha-11/beta-1 and alpha-V/beta-1 are receptors for fibronectin. Alpha-4/beta-1 recognizes one or more domains within the alternatively spliced CS-1 and CS-5 regions of fibronectin. Integrin alpha-5/beta-1 is a receptor for fibrinogen. Integrin alpha-1/beta-1, alpha-2/beta-1, alpha-6/beta-1 and alpha-7/beta-1 are receptors for lamimin. Integrin alpha-6/beta-1 (ITGA6:ITGB1) is present in oocytes and is involved in sperm-egg fusion. Integrin alpha-4/beta-1 is a receptor for VCAM1 and recognizes the sequence Q-I-D-S in VCAM1. Integrin alpha-9/beta-1 is a receptor for VCAM1, cytotactin and osteopontin. It recognizes the sequence A-E-I-D-G-I-E-L in cytotactin. Integrin alpha-3/beta-1 is a receptor for epiligrin, thrombospondin and CSPG4. Integrin alpha-3/beta-1 provides a docking site for FAP (seprase) at invadopodia plasma membranes in a collagen-dependent manner and hence may participate in the adhesion, formation of invadopodia and matrix degradation processes, promoting cell invasion. Alpha-3/beta-1 may mediate with LGALS3 the stimulation by CSPG4 of endothelial cells migration. Integrin alpha-V/beta-1 is a receptor for vitronectin. Beta-1 integrins recognize the sequence R-G-D in a wide array of ligands. When associated with alpha-7/beta-1 integrin, regulates cell adhesion and laminin matrix deposition. Involved in promoting endothelial cell motility and angiogenesis. Involved in osteoblast compaction through the fibronectin fibrillogenesis cell-mediated matrix assembly process and the formation of mineralized bone nodules. May be involved in up-regulation of the activity of kinases such as PKC via binding to KRT1. Together with KRT1 and RACK1, serves as a platform for SRC activation or inactivation. Plays a mechanistic adhesive role during telophase, required for the successful completion of cytokinesis (By similarity). ITGA4:ITGB1 binds to fractalkine (CX3CL1) and may act as its coreceptor in CX3CR1-dependent fractalkine signaling. ITGA4:ITGB1 and ITGA5:ITGB1 bind to PLA2G2A via a site (site 2) which is distinct from the classical ligand-binding site (site 1) and this induces integrin conformational changes and enhanced ligand binding to site 1. ITGA5:ITGB1 acts as a receptor for fibrillin-1 (FBN1) and mediates R-G-D-dependent cell adhesion to FBN1. ITGA5:ITGB1 acts as a receptor for fibronectin FN1 and mediates R-G-D-dependent cell adhesion to FN1 (By similarity). ITGA5:ITGB1 is a receptor for IL1B and binding is essential for IL1B signaling (By similarity). ITGA5:ITGB3 is a receptor for soluble CD40LG and is required for CD40/CD40LG signaling (By similarity). Plays an important role in myoblast differentiation and fusion during skeletal myogenesis (By similarity). ITGA9:ITGB1 may play a crucial role in SVEP1/polydom-mediated myoblast cell adhesion (By similarity). Integrins ITGA9:ITGB1 and ITGA4:ITGB1 repress PRKCA-mediated L-type voltage-gated channel Ca(2+) influx and ROCK-mediated calcium sensitivity in vascular smooth muscle cells via their interaction with SVEP1, thereby inhibit vasocontraction (By similarity).</text>
</comment>
<comment type="subunit">
    <text evidence="3 4 5">Interacts with seprase FAP (seprase); the interaction occurs at the cell surface of invadopodia membrane in a collagen-dependent manner (By similarity). Heterodimer of an alpha and a beta subunit. Beta-1 associates with either alpha-1, alpha-2, alpha-3, alpha-4, alpha-5, alpha-6, alpha-7, alpha-8, alpha-9, alpha-10, alpha-11 or alpha-V. ITGA6:ITGB1 is found in a complex with CD9; interaction takes place in oocytes and is involved in sperm-egg fusion. Binds LGALS3BP and NMRK2, when associated with alpha-7, but not with alpha-5. Interacts with FLNB, FLNC and RANBP9. Interacts with KRT1 in the presence of RACK1 and SRC. Interacts with JAML; integrin alpha-4/beta-1 may regulate leukocyte to endothelial cells adhesion by controlling JAML homodimerization. Interacts with RAB21. Interacts (via the cytoplasmic region) with RAB25 (via the hypervariable C-terminal region). Interacts with MYO10. Interacts with ITGB1BP1 (via C-terminal region); the interaction is a prerequisite for focal adhesion disassembly. Interacts with TLN1; the interaction is prevented by competitive binding of ITGB1BP1. Interacts with ACAP1; required for ITGB1 recycling. Interacts with ASAP3. Interacts with FERMT2; the interaction is inhibited in presence of ITGB1BP1. Interacts with DAB2. Interacts with FGR and HCK. Interacts with EMP2; the interaction may be direct or indirect and ITGB1 has a heterodimer form (By similarity). ITGA5:ITGB1 interacts with CCN3 (By similarity). ITGA4:ITGB1 is found in a ternary complex with CX3CR1 and CX3CL1 (By similarity). ITGA5:ITGB1 interacts with FBN1 (By similarity). ITGA5:ITGB1 interacts with IL1B. Interacts with MDK. ITGA4:ITGB1 interacts with MDK; this interaction mediates MDK-induced osteoblast cells migration through PXN phosphorylation. ITGA6:ITGB1 interacts with MDK; this interaction mediates MDK-induced neurite-outgrowth (By similarity). ITGA5:ITGB1 interacts with ACE2 (By similarity). Interacts with TMEM182 and LAMB1 (By similarity). Interacts with tensin TNS3; TNS3 also interacts with PEAK1, thus acting as an adapter molecule to bridge the association of PEAK1 with ITGB1 (By similarity). Interacts with tensin TNS4; the interaction displaces tensin TNS3 from the ITGB1 cytoplasmic tail and promotes ITGB1 stability (By similarity). Integrin ITGA9:ITGB1 interacts with SPP1/OPN (via N-terminus) (By similarity). Integrin ITGA9:ITGB1 interacts with TNC/TNFN3 (via the 3rd Fibronectin type-III domain) (By similarity). Integrins ITGA4:ITGB1 and ITGA9:ITGB1 interact with SVEP1 (via Sushi domain 21); thereby inhibit Ca(2+) intracellular signaling and as a result repress vasocontraction (By similarity). ITGA4:ITGB1 and ITGA5:ITGB1 interacts with SELP (By similarity). Interacts with CD248 (By similarity). ITGA5:ITGB1 interacts with IGFBP1 (By similarity). ITGA4:ITGB1 interacts with BCAM (By similarity). Interacts with ADGRG6 (By similarity).</text>
</comment>
<comment type="subunit">
    <molecule>Isoform 1</molecule>
    <text evidence="3">Interacts with the C-terminal region of FLNC (By similarity). Interacts with filamin FLNA isoform 3/VAR-1 (By similarity).</text>
</comment>
<comment type="subunit">
    <molecule>Isoform 2</molecule>
    <text evidence="3">Interacts with ACE2 (By similarity). Interacts with alpha-7B in cardiomyocytes of adult heart and alpha-7A and alpha-7B in adult skeletal muscle (By similarity). Interacts with filamin FLNA isoform 3/VAR-1 (By similarity).</text>
</comment>
<comment type="subcellular location">
    <subcellularLocation>
        <location evidence="3">Cell membrane</location>
        <topology evidence="6">Single-pass type I membrane protein</topology>
    </subcellularLocation>
    <subcellularLocation>
        <location evidence="3">Cell projection</location>
        <location evidence="3">Invadopodium membrane</location>
        <topology evidence="6">Single-pass type I membrane protein</topology>
    </subcellularLocation>
    <subcellularLocation>
        <location evidence="3">Cell projection</location>
        <location evidence="3">Ruffle membrane</location>
        <topology evidence="6">Single-pass type I membrane protein</topology>
    </subcellularLocation>
    <subcellularLocation>
        <location evidence="3">Recycling endosome</location>
    </subcellularLocation>
    <subcellularLocation>
        <location evidence="3">Melanosome</location>
    </subcellularLocation>
    <subcellularLocation>
        <location evidence="3">Cell projection</location>
        <location evidence="3">Lamellipodium</location>
    </subcellularLocation>
    <subcellularLocation>
        <location evidence="3">Cell projection</location>
        <location evidence="3">Ruffle</location>
    </subcellularLocation>
    <subcellularLocation>
        <location evidence="3">Cell junction</location>
        <location evidence="3">Focal adhesion</location>
    </subcellularLocation>
    <text evidence="3 9">Enriched preferentially at invadopodia, cell membrane protrusions that correspond to sites of cell invasion, in a collagen-dependent manner. Localized at plasma and ruffle membranes in a collagen-independent manner. Colocalizes with ITGB1BP1 and metastatic suppressor protein NME2 at the edge or peripheral ruffles and lamellipodia during the early stages of cell spreading on fibronectin or collagen. Translocates from peripheral focal adhesions to fibrillar adhesions in an ITGB1BP1-dependent manner (By similarity). Localized in trophoblast basement membrane and basolateral surfaces of uninucleate cells.</text>
</comment>
<comment type="subcellular location">
    <molecule>Isoform 2</molecule>
    <subcellularLocation>
        <location evidence="5">Cell membrane</location>
        <location evidence="5">Sarcolemma</location>
    </subcellularLocation>
    <subcellularLocation>
        <location evidence="5">Cell junction</location>
    </subcellularLocation>
    <text evidence="5">In cardiac muscle, found in costameres and intercalated disks.</text>
</comment>
<comment type="alternative products">
    <event type="alternative splicing"/>
    <isoform>
        <id>P53712-1</id>
        <name>1</name>
        <name>Beta-1A</name>
        <sequence type="displayed"/>
    </isoform>
    <isoform>
        <id>P53712-2</id>
        <name>2</name>
        <name>Beta-1D</name>
        <sequence type="described" ref="VSP_019224"/>
    </isoform>
</comment>
<comment type="developmental stage">
    <text evidence="9">In the developing placenta, expressed during the morula (days 6-7) through the attachment stage (day 21). Expressed in the endoderm of day 14 blastocysts but then is down-regulated in these cells prior to implantation. Expressed on lateral surfaces of trophectodermal cells as attachment proceeded and is particularly intense in migrating binucleate cells at day 24 of development.</text>
</comment>
<comment type="domain">
    <text evidence="3">The VWFA domain (or beta I domain) contains three cation-binding sites: the ligand-associated metal ion-binding site (LIMBS or SyMBS), the metal ion-dependent adhesion site (MIDAS), and the adjacent MIDAS site (ADMIDAS). This domain is also part of the ligand-binding site.</text>
</comment>
<comment type="similarity">
    <text evidence="11">Belongs to the integrin beta chain family.</text>
</comment>
<name>ITB1_BOVIN</name>
<feature type="signal peptide" evidence="6">
    <location>
        <begin position="1"/>
        <end position="20"/>
    </location>
</feature>
<feature type="chain" id="PRO_0000174219" description="Integrin beta-1">
    <location>
        <begin position="21"/>
        <end position="798"/>
    </location>
</feature>
<feature type="topological domain" description="Extracellular" evidence="6">
    <location>
        <begin position="21"/>
        <end position="728"/>
    </location>
</feature>
<feature type="transmembrane region" description="Helical" evidence="6">
    <location>
        <begin position="729"/>
        <end position="749"/>
    </location>
</feature>
<feature type="topological domain" description="Cytoplasmic" evidence="6">
    <location>
        <begin position="750"/>
        <end position="798"/>
    </location>
</feature>
<feature type="domain" description="PSI" evidence="6">
    <location>
        <begin position="26"/>
        <end position="76"/>
    </location>
</feature>
<feature type="domain" description="VWFA" evidence="2">
    <location>
        <begin position="140"/>
        <end position="378"/>
    </location>
</feature>
<feature type="domain" description="I-EGF 1" evidence="7">
    <location>
        <begin position="466"/>
        <end position="501"/>
    </location>
</feature>
<feature type="domain" description="I-EGF 2" evidence="7">
    <location>
        <begin position="502"/>
        <end position="554"/>
    </location>
</feature>
<feature type="domain" description="I-EGF 3" evidence="7">
    <location>
        <begin position="555"/>
        <end position="591"/>
    </location>
</feature>
<feature type="domain" description="I-EGF 4" evidence="7">
    <location>
        <begin position="592"/>
        <end position="631"/>
    </location>
</feature>
<feature type="region of interest" description="Disordered" evidence="8">
    <location>
        <begin position="75"/>
        <end position="105"/>
    </location>
</feature>
<feature type="region of interest" description="CX3CL1-binding" evidence="3">
    <location>
        <begin position="207"/>
        <end position="213"/>
    </location>
</feature>
<feature type="region of interest" description="CX3CL1-binding" evidence="3">
    <location>
        <begin position="295"/>
        <end position="314"/>
    </location>
</feature>
<feature type="region of interest" description="Interaction with TMEM182" evidence="4">
    <location>
        <begin position="383"/>
        <end position="465"/>
    </location>
</feature>
<feature type="region of interest" description="Signal for sorting from recycling endosomes; interaction with ACAP1" evidence="1">
    <location>
        <begin position="762"/>
        <end position="767"/>
    </location>
</feature>
<feature type="region of interest" description="Interaction with ITGB1BP1" evidence="1">
    <location>
        <begin position="785"/>
        <end position="792"/>
    </location>
</feature>
<feature type="compositionally biased region" description="Basic and acidic residues" evidence="8">
    <location>
        <begin position="75"/>
        <end position="91"/>
    </location>
</feature>
<feature type="binding site" description="in MIDAS binding site" evidence="3">
    <location>
        <position position="152"/>
    </location>
    <ligand>
        <name>Mg(2+)</name>
        <dbReference type="ChEBI" id="CHEBI:18420"/>
    </ligand>
</feature>
<feature type="binding site" description="in ADMIDAS binding site" evidence="3">
    <location>
        <position position="154"/>
    </location>
    <ligand>
        <name>Ca(2+)</name>
        <dbReference type="ChEBI" id="CHEBI:29108"/>
        <label>1</label>
    </ligand>
</feature>
<feature type="binding site" description="in MIDAS binding site" evidence="3">
    <location>
        <position position="154"/>
    </location>
    <ligand>
        <name>Mg(2+)</name>
        <dbReference type="ChEBI" id="CHEBI:18420"/>
    </ligand>
</feature>
<feature type="binding site" description="in ADMIDAS binding site" evidence="3">
    <location>
        <position position="157"/>
    </location>
    <ligand>
        <name>Ca(2+)</name>
        <dbReference type="ChEBI" id="CHEBI:29108"/>
        <label>1</label>
    </ligand>
</feature>
<feature type="binding site" description="in ADMIDAS binding site" evidence="3">
    <location>
        <position position="158"/>
    </location>
    <ligand>
        <name>Ca(2+)</name>
        <dbReference type="ChEBI" id="CHEBI:29108"/>
        <label>1</label>
    </ligand>
</feature>
<feature type="binding site" description="in LIMBS binding site" evidence="3">
    <location>
        <position position="189"/>
    </location>
    <ligand>
        <name>Ca(2+)</name>
        <dbReference type="ChEBI" id="CHEBI:29108"/>
        <label>2</label>
    </ligand>
</feature>
<feature type="binding site" description="in LIMBS binding site" evidence="3">
    <location>
        <position position="244"/>
    </location>
    <ligand>
        <name>Ca(2+)</name>
        <dbReference type="ChEBI" id="CHEBI:29108"/>
        <label>2</label>
    </ligand>
</feature>
<feature type="binding site" description="in LIMBS binding site" evidence="3">
    <location>
        <position position="246"/>
    </location>
    <ligand>
        <name>Ca(2+)</name>
        <dbReference type="ChEBI" id="CHEBI:29108"/>
        <label>2</label>
    </ligand>
</feature>
<feature type="binding site" description="in LIMBS binding site" evidence="3">
    <location>
        <position position="248"/>
    </location>
    <ligand>
        <name>Ca(2+)</name>
        <dbReference type="ChEBI" id="CHEBI:29108"/>
        <label>2</label>
    </ligand>
</feature>
<feature type="binding site" description="in LIMBS binding site" evidence="3">
    <location>
        <position position="249"/>
    </location>
    <ligand>
        <name>Ca(2+)</name>
        <dbReference type="ChEBI" id="CHEBI:29108"/>
        <label>2</label>
    </ligand>
</feature>
<feature type="binding site" description="in MIDAS binding site" evidence="3">
    <location>
        <position position="249"/>
    </location>
    <ligand>
        <name>Mg(2+)</name>
        <dbReference type="ChEBI" id="CHEBI:18420"/>
    </ligand>
</feature>
<feature type="binding site" description="in ADMIDAS binding site" evidence="3">
    <location>
        <position position="362"/>
    </location>
    <ligand>
        <name>Ca(2+)</name>
        <dbReference type="ChEBI" id="CHEBI:29108"/>
        <label>1</label>
    </ligand>
</feature>
<feature type="modified residue" description="Phosphothreonine" evidence="3">
    <location>
        <position position="777"/>
    </location>
</feature>
<feature type="modified residue" description="Phosphotyrosine" evidence="3">
    <location>
        <position position="783"/>
    </location>
</feature>
<feature type="modified residue" description="Phosphoserine" evidence="3">
    <location>
        <position position="785"/>
    </location>
</feature>
<feature type="modified residue" description="Phosphothreonine" evidence="3">
    <location>
        <position position="789"/>
    </location>
</feature>
<feature type="modified residue" description="N6-acetyllysine; alternate" evidence="3">
    <location>
        <position position="794"/>
    </location>
</feature>
<feature type="glycosylation site" description="N-linked (GlcNAc...) asparagine" evidence="6">
    <location>
        <position position="50"/>
    </location>
</feature>
<feature type="glycosylation site" description="N-linked (GlcNAc...) asparagine" evidence="6">
    <location>
        <position position="94"/>
    </location>
</feature>
<feature type="glycosylation site" description="N-linked (GlcNAc...) asparagine" evidence="6">
    <location>
        <position position="97"/>
    </location>
</feature>
<feature type="glycosylation site" description="N-linked (GlcNAc...) asparagine" evidence="6">
    <location>
        <position position="212"/>
    </location>
</feature>
<feature type="glycosylation site" description="N-linked (GlcNAc...) asparagine" evidence="6">
    <location>
        <position position="269"/>
    </location>
</feature>
<feature type="glycosylation site" description="N-linked (GlcNAc...) asparagine" evidence="6">
    <location>
        <position position="363"/>
    </location>
</feature>
<feature type="glycosylation site" description="N-linked (GlcNAc...) asparagine" evidence="6">
    <location>
        <position position="406"/>
    </location>
</feature>
<feature type="glycosylation site" description="N-linked (GlcNAc...) asparagine" evidence="6">
    <location>
        <position position="417"/>
    </location>
</feature>
<feature type="glycosylation site" description="N-linked (GlcNAc...) asparagine" evidence="6">
    <location>
        <position position="481"/>
    </location>
</feature>
<feature type="glycosylation site" description="N-linked (GlcNAc...) asparagine" evidence="6">
    <location>
        <position position="520"/>
    </location>
</feature>
<feature type="glycosylation site" description="N-linked (GlcNAc...) asparagine" evidence="6">
    <location>
        <position position="584"/>
    </location>
</feature>
<feature type="glycosylation site" description="N-linked (GlcNAc...) asparagine" evidence="6">
    <location>
        <position position="669"/>
    </location>
</feature>
<feature type="disulfide bond" evidence="3">
    <location>
        <begin position="27"/>
        <end position="45"/>
    </location>
</feature>
<feature type="disulfide bond" evidence="3">
    <location>
        <begin position="35"/>
        <end position="464"/>
    </location>
</feature>
<feature type="disulfide bond" evidence="3">
    <location>
        <begin position="38"/>
        <end position="64"/>
    </location>
</feature>
<feature type="disulfide bond" evidence="3">
    <location>
        <begin position="48"/>
        <end position="75"/>
    </location>
</feature>
<feature type="disulfide bond" evidence="3">
    <location>
        <begin position="207"/>
        <end position="213"/>
    </location>
</feature>
<feature type="disulfide bond" evidence="3">
    <location>
        <begin position="261"/>
        <end position="301"/>
    </location>
</feature>
<feature type="disulfide bond" evidence="3">
    <location>
        <begin position="401"/>
        <end position="415"/>
    </location>
</feature>
<feature type="disulfide bond" evidence="3">
    <location>
        <begin position="435"/>
        <end position="462"/>
    </location>
</feature>
<feature type="disulfide bond" evidence="7">
    <location>
        <begin position="466"/>
        <end position="486"/>
    </location>
</feature>
<feature type="disulfide bond" evidence="7">
    <location>
        <begin position="477"/>
        <end position="489"/>
    </location>
</feature>
<feature type="disulfide bond" evidence="7">
    <location>
        <begin position="491"/>
        <end position="500"/>
    </location>
</feature>
<feature type="disulfide bond" evidence="7">
    <location>
        <begin position="502"/>
        <end position="533"/>
    </location>
</feature>
<feature type="disulfide bond" evidence="7">
    <location>
        <begin position="516"/>
        <end position="531"/>
    </location>
</feature>
<feature type="disulfide bond" evidence="7">
    <location>
        <begin position="525"/>
        <end position="536"/>
    </location>
</feature>
<feature type="disulfide bond" evidence="7">
    <location>
        <begin position="538"/>
        <end position="553"/>
    </location>
</feature>
<feature type="disulfide bond" evidence="7">
    <location>
        <begin position="555"/>
        <end position="576"/>
    </location>
</feature>
<feature type="disulfide bond" evidence="7">
    <location>
        <begin position="560"/>
        <end position="574"/>
    </location>
</feature>
<feature type="disulfide bond" evidence="7">
    <location>
        <begin position="568"/>
        <end position="579"/>
    </location>
</feature>
<feature type="disulfide bond" evidence="7">
    <location>
        <begin position="581"/>
        <end position="590"/>
    </location>
</feature>
<feature type="disulfide bond" evidence="7">
    <location>
        <begin position="592"/>
        <end position="615"/>
    </location>
</feature>
<feature type="disulfide bond" evidence="7">
    <location>
        <begin position="599"/>
        <end position="613"/>
    </location>
</feature>
<feature type="disulfide bond" evidence="7">
    <location>
        <begin position="607"/>
        <end position="618"/>
    </location>
</feature>
<feature type="disulfide bond" evidence="7">
    <location>
        <begin position="620"/>
        <end position="630"/>
    </location>
</feature>
<feature type="disulfide bond" evidence="3">
    <location>
        <begin position="633"/>
        <end position="636"/>
    </location>
</feature>
<feature type="disulfide bond" evidence="3">
    <location>
        <begin position="640"/>
        <end position="691"/>
    </location>
</feature>
<feature type="disulfide bond" evidence="3">
    <location>
        <begin position="646"/>
        <end position="665"/>
    </location>
</feature>
<feature type="disulfide bond" evidence="3">
    <location>
        <begin position="649"/>
        <end position="661"/>
    </location>
</feature>
<feature type="disulfide bond" evidence="3">
    <location>
        <begin position="699"/>
        <end position="723"/>
    </location>
</feature>
<feature type="cross-link" description="Glycyl lysine isopeptide (Lys-Gly) (interchain with G-Cter in SUMO1); alternate" evidence="3">
    <location>
        <position position="794"/>
    </location>
</feature>
<feature type="splice variant" id="VSP_019224" description="In isoform 2." evidence="10">
    <original>AVTTVVNPKYEGK</original>
    <variation>PINNFKNPNYGRKAGL</variation>
    <location>
        <begin position="786"/>
        <end position="798"/>
    </location>
</feature>
<feature type="sequence conflict" description="In Ref. 2; ABH07895." evidence="11" ref="2">
    <original>F</original>
    <variation>S</variation>
    <location>
        <position position="217"/>
    </location>
</feature>
<feature type="sequence conflict" description="In Ref. 2; ABH07895." evidence="11" ref="2">
    <original>S</original>
    <variation>P</variation>
    <location>
        <position position="247"/>
    </location>
</feature>
<feature type="sequence conflict" description="In Ref. 1; AAL78037 and 4; AAA80571." evidence="11" ref="1 4">
    <original>R</original>
    <variation>W</variation>
    <location>
        <position position="268"/>
    </location>
</feature>
<feature type="sequence conflict" description="In Ref. 1; AAL78037 and 4; AAA80571." evidence="11" ref="1 4">
    <original>G</original>
    <variation>V</variation>
    <location>
        <position position="281"/>
    </location>
</feature>
<feature type="sequence conflict" description="In Ref. 2; ABH07895." evidence="11" ref="2">
    <original>H</original>
    <variation>Y</variation>
    <location>
        <position position="321"/>
    </location>
</feature>
<feature type="sequence conflict" description="In Ref. 4; AAA80571." evidence="11" ref="4">
    <original>P</original>
    <variation>A</variation>
    <location>
        <position position="390"/>
    </location>
</feature>
<feature type="sequence conflict" description="In Ref. 4; AAA80571." evidence="11" ref="4">
    <original>D</original>
    <variation>G</variation>
    <location>
        <position position="595"/>
    </location>
</feature>
<feature type="sequence conflict" description="In Ref. 4; AAA80571." evidence="11" ref="4">
    <original>F</original>
    <variation>L</variation>
    <location>
        <position position="668"/>
    </location>
</feature>
<feature type="sequence conflict" description="In Ref. 1; AAL78037." evidence="11" ref="1">
    <original>C</original>
    <variation>Y</variation>
    <location>
        <position position="691"/>
    </location>
</feature>
<feature type="sequence conflict" description="In Ref. 1; AAL78037." evidence="11" ref="1">
    <original>G</original>
    <variation>V</variation>
    <location>
        <position position="709"/>
    </location>
</feature>
<feature type="sequence conflict" description="In Ref. 3; AAI14108." evidence="11" ref="3">
    <original>G</original>
    <variation>Q</variation>
    <location>
        <position position="778"/>
    </location>
</feature>
<protein>
    <recommendedName>
        <fullName>Integrin beta-1</fullName>
    </recommendedName>
    <alternativeName>
        <fullName>Fibronectin receptor subunit beta</fullName>
    </alternativeName>
    <alternativeName>
        <fullName>VLA-4 subunit beta</fullName>
    </alternativeName>
    <cdAntigenName>CD29</cdAntigenName>
</protein>
<proteinExistence type="evidence at protein level"/>
<evidence type="ECO:0000250" key="1"/>
<evidence type="ECO:0000250" key="2">
    <source>
        <dbReference type="UniProtKB" id="P05106"/>
    </source>
</evidence>
<evidence type="ECO:0000250" key="3">
    <source>
        <dbReference type="UniProtKB" id="P05556"/>
    </source>
</evidence>
<evidence type="ECO:0000250" key="4">
    <source>
        <dbReference type="UniProtKB" id="P07228"/>
    </source>
</evidence>
<evidence type="ECO:0000250" key="5">
    <source>
        <dbReference type="UniProtKB" id="P09055"/>
    </source>
</evidence>
<evidence type="ECO:0000255" key="6"/>
<evidence type="ECO:0000255" key="7">
    <source>
        <dbReference type="PROSITE-ProRule" id="PRU01392"/>
    </source>
</evidence>
<evidence type="ECO:0000256" key="8">
    <source>
        <dbReference type="SAM" id="MobiDB-lite"/>
    </source>
</evidence>
<evidence type="ECO:0000269" key="9">
    <source>
    </source>
</evidence>
<evidence type="ECO:0000303" key="10">
    <source ref="3"/>
</evidence>
<evidence type="ECO:0000305" key="11"/>
<organism>
    <name type="scientific">Bos taurus</name>
    <name type="common">Bovine</name>
    <dbReference type="NCBI Taxonomy" id="9913"/>
    <lineage>
        <taxon>Eukaryota</taxon>
        <taxon>Metazoa</taxon>
        <taxon>Chordata</taxon>
        <taxon>Craniata</taxon>
        <taxon>Vertebrata</taxon>
        <taxon>Euteleostomi</taxon>
        <taxon>Mammalia</taxon>
        <taxon>Eutheria</taxon>
        <taxon>Laurasiatheria</taxon>
        <taxon>Artiodactyla</taxon>
        <taxon>Ruminantia</taxon>
        <taxon>Pecora</taxon>
        <taxon>Bovidae</taxon>
        <taxon>Bovinae</taxon>
        <taxon>Bos</taxon>
    </lineage>
</organism>
<keyword id="KW-0007">Acetylation</keyword>
<keyword id="KW-0025">Alternative splicing</keyword>
<keyword id="KW-0106">Calcium</keyword>
<keyword id="KW-0130">Cell adhesion</keyword>
<keyword id="KW-0965">Cell junction</keyword>
<keyword id="KW-1003">Cell membrane</keyword>
<keyword id="KW-0966">Cell projection</keyword>
<keyword id="KW-1015">Disulfide bond</keyword>
<keyword id="KW-0245">EGF-like domain</keyword>
<keyword id="KW-0967">Endosome</keyword>
<keyword id="KW-0325">Glycoprotein</keyword>
<keyword id="KW-1183">Host cell receptor for virus entry</keyword>
<keyword id="KW-0945">Host-virus interaction</keyword>
<keyword id="KW-0401">Integrin</keyword>
<keyword id="KW-1017">Isopeptide bond</keyword>
<keyword id="KW-0460">Magnesium</keyword>
<keyword id="KW-0472">Membrane</keyword>
<keyword id="KW-0479">Metal-binding</keyword>
<keyword id="KW-0517">Myogenesis</keyword>
<keyword id="KW-0597">Phosphoprotein</keyword>
<keyword id="KW-0675">Receptor</keyword>
<keyword id="KW-1185">Reference proteome</keyword>
<keyword id="KW-0677">Repeat</keyword>
<keyword id="KW-0732">Signal</keyword>
<keyword id="KW-0812">Transmembrane</keyword>
<keyword id="KW-1133">Transmembrane helix</keyword>
<keyword id="KW-0832">Ubl conjugation</keyword>
<accession>P53712</accession>
<accession>Q0PDN7</accession>
<accession>Q29RM8</accession>
<accession>Q8SQC0</accession>